<sequence length="203" mass="22707">MKELILASASPRRKEILDSLGVLFSVKISNFDESSITEKDPVKRCILTARGKAENLFKTLPQNEGAQKLILAADTLVFAENTAFPNEKIIFGKPKNEKEAEMMLKSHSGSLHFVVSAICLLDCKTGQINEKHSVSKVFFKKLSDKEISAYLKTDEWKDAAGAYKIQGKASFFIEKIEGSYTGIVGLPVRELYEILNKTEFRIL</sequence>
<protein>
    <recommendedName>
        <fullName evidence="1">dTTP/UTP pyrophosphatase</fullName>
        <shortName evidence="1">dTTPase/UTPase</shortName>
        <ecNumber evidence="1">3.6.1.9</ecNumber>
    </recommendedName>
    <alternativeName>
        <fullName evidence="1">Nucleoside triphosphate pyrophosphatase</fullName>
    </alternativeName>
    <alternativeName>
        <fullName evidence="1">Nucleotide pyrophosphatase</fullName>
        <shortName evidence="1">Nucleotide PPase</shortName>
    </alternativeName>
</protein>
<comment type="function">
    <text evidence="1">Nucleoside triphosphate pyrophosphatase that hydrolyzes dTTP and UTP. May have a dual role in cell division arrest and in preventing the incorporation of modified nucleotides into cellular nucleic acids.</text>
</comment>
<comment type="catalytic activity">
    <reaction evidence="1">
        <text>dTTP + H2O = dTMP + diphosphate + H(+)</text>
        <dbReference type="Rhea" id="RHEA:28534"/>
        <dbReference type="ChEBI" id="CHEBI:15377"/>
        <dbReference type="ChEBI" id="CHEBI:15378"/>
        <dbReference type="ChEBI" id="CHEBI:33019"/>
        <dbReference type="ChEBI" id="CHEBI:37568"/>
        <dbReference type="ChEBI" id="CHEBI:63528"/>
        <dbReference type="EC" id="3.6.1.9"/>
    </reaction>
</comment>
<comment type="catalytic activity">
    <reaction evidence="1">
        <text>UTP + H2O = UMP + diphosphate + H(+)</text>
        <dbReference type="Rhea" id="RHEA:29395"/>
        <dbReference type="ChEBI" id="CHEBI:15377"/>
        <dbReference type="ChEBI" id="CHEBI:15378"/>
        <dbReference type="ChEBI" id="CHEBI:33019"/>
        <dbReference type="ChEBI" id="CHEBI:46398"/>
        <dbReference type="ChEBI" id="CHEBI:57865"/>
        <dbReference type="EC" id="3.6.1.9"/>
    </reaction>
</comment>
<comment type="cofactor">
    <cofactor evidence="1">
        <name>a divalent metal cation</name>
        <dbReference type="ChEBI" id="CHEBI:60240"/>
    </cofactor>
</comment>
<comment type="subcellular location">
    <subcellularLocation>
        <location evidence="1">Cytoplasm</location>
    </subcellularLocation>
</comment>
<comment type="similarity">
    <text evidence="1">Belongs to the Maf family. YhdE subfamily.</text>
</comment>
<evidence type="ECO:0000255" key="1">
    <source>
        <dbReference type="HAMAP-Rule" id="MF_00528"/>
    </source>
</evidence>
<organism>
    <name type="scientific">Treponema denticola (strain ATCC 35405 / DSM 14222 / CIP 103919 / JCM 8153 / KCTC 15104)</name>
    <dbReference type="NCBI Taxonomy" id="243275"/>
    <lineage>
        <taxon>Bacteria</taxon>
        <taxon>Pseudomonadati</taxon>
        <taxon>Spirochaetota</taxon>
        <taxon>Spirochaetia</taxon>
        <taxon>Spirochaetales</taxon>
        <taxon>Treponemataceae</taxon>
        <taxon>Treponema</taxon>
    </lineage>
</organism>
<dbReference type="EC" id="3.6.1.9" evidence="1"/>
<dbReference type="EMBL" id="AE017226">
    <property type="protein sequence ID" value="AAS12866.1"/>
    <property type="molecule type" value="Genomic_DNA"/>
</dbReference>
<dbReference type="RefSeq" id="NP_972947.1">
    <property type="nucleotide sequence ID" value="NC_002967.9"/>
</dbReference>
<dbReference type="RefSeq" id="WP_002680263.1">
    <property type="nucleotide sequence ID" value="NC_002967.9"/>
</dbReference>
<dbReference type="SMR" id="Q73K74"/>
<dbReference type="STRING" id="243275.TDE_2348"/>
<dbReference type="PaxDb" id="243275-TDE_2348"/>
<dbReference type="GeneID" id="2739957"/>
<dbReference type="KEGG" id="tde:TDE_2348"/>
<dbReference type="PATRIC" id="fig|243275.7.peg.2216"/>
<dbReference type="eggNOG" id="COG0424">
    <property type="taxonomic scope" value="Bacteria"/>
</dbReference>
<dbReference type="HOGENOM" id="CLU_040416_0_0_12"/>
<dbReference type="OrthoDB" id="9807767at2"/>
<dbReference type="Proteomes" id="UP000008212">
    <property type="component" value="Chromosome"/>
</dbReference>
<dbReference type="GO" id="GO:0005737">
    <property type="term" value="C:cytoplasm"/>
    <property type="evidence" value="ECO:0007669"/>
    <property type="project" value="UniProtKB-SubCell"/>
</dbReference>
<dbReference type="GO" id="GO:0036218">
    <property type="term" value="F:dTTP diphosphatase activity"/>
    <property type="evidence" value="ECO:0007669"/>
    <property type="project" value="RHEA"/>
</dbReference>
<dbReference type="GO" id="GO:0036221">
    <property type="term" value="F:UTP diphosphatase activity"/>
    <property type="evidence" value="ECO:0007669"/>
    <property type="project" value="RHEA"/>
</dbReference>
<dbReference type="GO" id="GO:0009117">
    <property type="term" value="P:nucleotide metabolic process"/>
    <property type="evidence" value="ECO:0007669"/>
    <property type="project" value="UniProtKB-KW"/>
</dbReference>
<dbReference type="CDD" id="cd00555">
    <property type="entry name" value="Maf"/>
    <property type="match status" value="1"/>
</dbReference>
<dbReference type="Gene3D" id="3.90.950.10">
    <property type="match status" value="1"/>
</dbReference>
<dbReference type="HAMAP" id="MF_00528">
    <property type="entry name" value="Maf"/>
    <property type="match status" value="1"/>
</dbReference>
<dbReference type="InterPro" id="IPR029001">
    <property type="entry name" value="ITPase-like_fam"/>
</dbReference>
<dbReference type="InterPro" id="IPR003697">
    <property type="entry name" value="Maf-like"/>
</dbReference>
<dbReference type="NCBIfam" id="TIGR00172">
    <property type="entry name" value="maf"/>
    <property type="match status" value="1"/>
</dbReference>
<dbReference type="PANTHER" id="PTHR43213">
    <property type="entry name" value="BIFUNCTIONAL DTTP/UTP PYROPHOSPHATASE/METHYLTRANSFERASE PROTEIN-RELATED"/>
    <property type="match status" value="1"/>
</dbReference>
<dbReference type="PANTHER" id="PTHR43213:SF5">
    <property type="entry name" value="BIFUNCTIONAL DTTP_UTP PYROPHOSPHATASE_METHYLTRANSFERASE PROTEIN-RELATED"/>
    <property type="match status" value="1"/>
</dbReference>
<dbReference type="Pfam" id="PF02545">
    <property type="entry name" value="Maf"/>
    <property type="match status" value="1"/>
</dbReference>
<dbReference type="PIRSF" id="PIRSF006305">
    <property type="entry name" value="Maf"/>
    <property type="match status" value="1"/>
</dbReference>
<dbReference type="SUPFAM" id="SSF52972">
    <property type="entry name" value="ITPase-like"/>
    <property type="match status" value="1"/>
</dbReference>
<proteinExistence type="inferred from homology"/>
<keyword id="KW-0963">Cytoplasm</keyword>
<keyword id="KW-0378">Hydrolase</keyword>
<keyword id="KW-0546">Nucleotide metabolism</keyword>
<keyword id="KW-1185">Reference proteome</keyword>
<name>NTPPA_TREDE</name>
<reference key="1">
    <citation type="journal article" date="2004" name="Proc. Natl. Acad. Sci. U.S.A.">
        <title>Comparison of the genome of the oral pathogen Treponema denticola with other spirochete genomes.</title>
        <authorList>
            <person name="Seshadri R."/>
            <person name="Myers G.S.A."/>
            <person name="Tettelin H."/>
            <person name="Eisen J.A."/>
            <person name="Heidelberg J.F."/>
            <person name="Dodson R.J."/>
            <person name="Davidsen T.M."/>
            <person name="DeBoy R.T."/>
            <person name="Fouts D.E."/>
            <person name="Haft D.H."/>
            <person name="Selengut J."/>
            <person name="Ren Q."/>
            <person name="Brinkac L.M."/>
            <person name="Madupu R."/>
            <person name="Kolonay J.F."/>
            <person name="Durkin S.A."/>
            <person name="Daugherty S.C."/>
            <person name="Shetty J."/>
            <person name="Shvartsbeyn A."/>
            <person name="Gebregeorgis E."/>
            <person name="Geer K."/>
            <person name="Tsegaye G."/>
            <person name="Malek J.A."/>
            <person name="Ayodeji B."/>
            <person name="Shatsman S."/>
            <person name="McLeod M.P."/>
            <person name="Smajs D."/>
            <person name="Howell J.K."/>
            <person name="Pal S."/>
            <person name="Amin A."/>
            <person name="Vashisth P."/>
            <person name="McNeill T.Z."/>
            <person name="Xiang Q."/>
            <person name="Sodergren E."/>
            <person name="Baca E."/>
            <person name="Weinstock G.M."/>
            <person name="Norris S.J."/>
            <person name="Fraser C.M."/>
            <person name="Paulsen I.T."/>
        </authorList>
    </citation>
    <scope>NUCLEOTIDE SEQUENCE [LARGE SCALE GENOMIC DNA]</scope>
    <source>
        <strain>ATCC 35405 / DSM 14222 / CIP 103919 / JCM 8153 / KCTC 15104</strain>
    </source>
</reference>
<gene>
    <name type="ordered locus">TDE_2348</name>
</gene>
<accession>Q73K74</accession>
<feature type="chain" id="PRO_0000267459" description="dTTP/UTP pyrophosphatase">
    <location>
        <begin position="1"/>
        <end position="203"/>
    </location>
</feature>
<feature type="active site" description="Proton acceptor" evidence="1">
    <location>
        <position position="74"/>
    </location>
</feature>
<feature type="site" description="Important for substrate specificity" evidence="1">
    <location>
        <position position="12"/>
    </location>
</feature>
<feature type="site" description="Important for substrate specificity" evidence="1">
    <location>
        <position position="75"/>
    </location>
</feature>
<feature type="site" description="Important for substrate specificity" evidence="1">
    <location>
        <position position="166"/>
    </location>
</feature>